<keyword id="KW-0963">Cytoplasm</keyword>
<keyword id="KW-0238">DNA-binding</keyword>
<sequence>MRGMGNMNNMMKQMQKMQKDMAKAQEELKELSVEGTAGGGMVKVVVSGHKEVLDVIIAEDVVDPDDVDMLQDLVLAAINDAMKQADQLVNDKMGRFTQGMNLPGF</sequence>
<accession>C4KZX3</accession>
<proteinExistence type="inferred from homology"/>
<evidence type="ECO:0000255" key="1">
    <source>
        <dbReference type="HAMAP-Rule" id="MF_00274"/>
    </source>
</evidence>
<evidence type="ECO:0000256" key="2">
    <source>
        <dbReference type="SAM" id="MobiDB-lite"/>
    </source>
</evidence>
<protein>
    <recommendedName>
        <fullName evidence="1">Nucleoid-associated protein EAT1b_1710</fullName>
    </recommendedName>
</protein>
<dbReference type="EMBL" id="CP001615">
    <property type="protein sequence ID" value="ACQ70636.1"/>
    <property type="molecule type" value="Genomic_DNA"/>
</dbReference>
<dbReference type="RefSeq" id="WP_012727754.1">
    <property type="nucleotide sequence ID" value="NC_012673.1"/>
</dbReference>
<dbReference type="SMR" id="C4KZX3"/>
<dbReference type="STRING" id="360911.EAT1b_1710"/>
<dbReference type="KEGG" id="eat:EAT1b_1710"/>
<dbReference type="eggNOG" id="COG0718">
    <property type="taxonomic scope" value="Bacteria"/>
</dbReference>
<dbReference type="HOGENOM" id="CLU_140930_1_0_9"/>
<dbReference type="OrthoDB" id="9795263at2"/>
<dbReference type="Proteomes" id="UP000000716">
    <property type="component" value="Chromosome"/>
</dbReference>
<dbReference type="GO" id="GO:0043590">
    <property type="term" value="C:bacterial nucleoid"/>
    <property type="evidence" value="ECO:0007669"/>
    <property type="project" value="UniProtKB-UniRule"/>
</dbReference>
<dbReference type="GO" id="GO:0005829">
    <property type="term" value="C:cytosol"/>
    <property type="evidence" value="ECO:0007669"/>
    <property type="project" value="TreeGrafter"/>
</dbReference>
<dbReference type="GO" id="GO:0003677">
    <property type="term" value="F:DNA binding"/>
    <property type="evidence" value="ECO:0007669"/>
    <property type="project" value="UniProtKB-UniRule"/>
</dbReference>
<dbReference type="FunFam" id="3.30.1310.10:FF:000002">
    <property type="entry name" value="Nucleoid-associated protein IKC_06587"/>
    <property type="match status" value="1"/>
</dbReference>
<dbReference type="Gene3D" id="3.30.1310.10">
    <property type="entry name" value="Nucleoid-associated protein YbaB-like domain"/>
    <property type="match status" value="1"/>
</dbReference>
<dbReference type="HAMAP" id="MF_00274">
    <property type="entry name" value="DNA_YbaB_EbfC"/>
    <property type="match status" value="1"/>
</dbReference>
<dbReference type="InterPro" id="IPR036894">
    <property type="entry name" value="YbaB-like_sf"/>
</dbReference>
<dbReference type="InterPro" id="IPR004401">
    <property type="entry name" value="YbaB/EbfC"/>
</dbReference>
<dbReference type="NCBIfam" id="TIGR00103">
    <property type="entry name" value="DNA_YbaB_EbfC"/>
    <property type="match status" value="1"/>
</dbReference>
<dbReference type="PANTHER" id="PTHR33449">
    <property type="entry name" value="NUCLEOID-ASSOCIATED PROTEIN YBAB"/>
    <property type="match status" value="1"/>
</dbReference>
<dbReference type="PANTHER" id="PTHR33449:SF1">
    <property type="entry name" value="NUCLEOID-ASSOCIATED PROTEIN YBAB"/>
    <property type="match status" value="1"/>
</dbReference>
<dbReference type="Pfam" id="PF02575">
    <property type="entry name" value="YbaB_DNA_bd"/>
    <property type="match status" value="1"/>
</dbReference>
<dbReference type="PIRSF" id="PIRSF004555">
    <property type="entry name" value="UCP004555"/>
    <property type="match status" value="1"/>
</dbReference>
<dbReference type="SUPFAM" id="SSF82607">
    <property type="entry name" value="YbaB-like"/>
    <property type="match status" value="1"/>
</dbReference>
<reference key="1">
    <citation type="journal article" date="2011" name="J. Bacteriol.">
        <title>Complete genome sequence of the Thermophilic Bacterium Exiguobacterium sp. AT1b.</title>
        <authorList>
            <person name="Vishnivetskaya T.A."/>
            <person name="Lucas S."/>
            <person name="Copeland A."/>
            <person name="Lapidus A."/>
            <person name="Glavina del Rio T."/>
            <person name="Dalin E."/>
            <person name="Tice H."/>
            <person name="Bruce D.C."/>
            <person name="Goodwin L.A."/>
            <person name="Pitluck S."/>
            <person name="Saunders E."/>
            <person name="Brettin T."/>
            <person name="Detter C."/>
            <person name="Han C."/>
            <person name="Larimer F."/>
            <person name="Land M.L."/>
            <person name="Hauser L.J."/>
            <person name="Kyrpides N.C."/>
            <person name="Ovchinnikova G."/>
            <person name="Kathariou S."/>
            <person name="Ramaley R.F."/>
            <person name="Rodrigues D.F."/>
            <person name="Hendrix C."/>
            <person name="Richardson P."/>
            <person name="Tiedje J.M."/>
        </authorList>
    </citation>
    <scope>NUCLEOTIDE SEQUENCE [LARGE SCALE GENOMIC DNA]</scope>
    <source>
        <strain>ATCC BAA-1283 / AT1b</strain>
    </source>
</reference>
<gene>
    <name type="ordered locus">EAT1b_1710</name>
</gene>
<comment type="function">
    <text evidence="1">Binds to DNA and alters its conformation. May be involved in regulation of gene expression, nucleoid organization and DNA protection.</text>
</comment>
<comment type="subunit">
    <text evidence="1">Homodimer.</text>
</comment>
<comment type="subcellular location">
    <subcellularLocation>
        <location evidence="1">Cytoplasm</location>
        <location evidence="1">Nucleoid</location>
    </subcellularLocation>
</comment>
<comment type="similarity">
    <text evidence="1">Belongs to the YbaB/EbfC family.</text>
</comment>
<name>Y1710_EXISA</name>
<organism>
    <name type="scientific">Exiguobacterium sp. (strain ATCC BAA-1283 / AT1b)</name>
    <dbReference type="NCBI Taxonomy" id="360911"/>
    <lineage>
        <taxon>Bacteria</taxon>
        <taxon>Bacillati</taxon>
        <taxon>Bacillota</taxon>
        <taxon>Bacilli</taxon>
        <taxon>Bacillales</taxon>
        <taxon>Bacillales Family XII. Incertae Sedis</taxon>
        <taxon>Exiguobacterium</taxon>
    </lineage>
</organism>
<feature type="chain" id="PRO_1000204771" description="Nucleoid-associated protein EAT1b_1710">
    <location>
        <begin position="1"/>
        <end position="105"/>
    </location>
</feature>
<feature type="region of interest" description="Disordered" evidence="2">
    <location>
        <begin position="1"/>
        <end position="26"/>
    </location>
</feature>
<feature type="compositionally biased region" description="Low complexity" evidence="2">
    <location>
        <begin position="1"/>
        <end position="16"/>
    </location>
</feature>
<feature type="compositionally biased region" description="Basic and acidic residues" evidence="2">
    <location>
        <begin position="17"/>
        <end position="26"/>
    </location>
</feature>